<sequence length="440" mass="50108">MRNKMIYFNFHLFVIIFANLQIFQVQAANIFCYYDTQRITDVNAAINYLEPALQFCNFLIYGYAGIDGETYQVKSLDYGLNYDIYQAITSLKLKHNRLKVLLSIGGDRDQTEDLAEDNKYLKLLENLSSRNAFINSIQSVIRTYGFDGLDMAWQFPKNPPKHEHSGFRKYLDKLMNLFRRSPVIDENSAFHKEQFVSLLTELRQSLNPMGAIMTMTVLPHVSAELFLDVKPIVNHVDFIILATFDYLTPYRDPTIAHYTAPIYAVSEHDPSHNINYDVQYWLNHTTATSKLVLGVPAYGRSWTMIKKSGITGHPPITAGGPGRAGHRTLTAGLLSWPEICVKIHQNKELEGDAARFRKVSDPTKRFGTYAYRSVDENNEYGIWVSYEEPKTAANKAEYAHARNLSGVALFDLSMDDVTGECGDGTYSILKSIHNAFKKFK</sequence>
<protein>
    <recommendedName>
        <fullName>Chitinase-like protein Idgf5</fullName>
    </recommendedName>
    <alternativeName>
        <fullName>Imaginal disk growth factor protein 5</fullName>
    </alternativeName>
</protein>
<keyword id="KW-0217">Developmental protein</keyword>
<keyword id="KW-1015">Disulfide bond</keyword>
<keyword id="KW-0325">Glycoprotein</keyword>
<keyword id="KW-0964">Secreted</keyword>
<keyword id="KW-0732">Signal</keyword>
<feature type="signal peptide" evidence="2">
    <location>
        <begin position="1"/>
        <end position="27"/>
    </location>
</feature>
<feature type="chain" id="PRO_0000291641" description="Chitinase-like protein Idgf5">
    <location>
        <begin position="28"/>
        <end position="440"/>
    </location>
</feature>
<feature type="domain" description="GH18" evidence="3">
    <location>
        <begin position="28"/>
        <end position="439"/>
    </location>
</feature>
<feature type="glycosylation site" description="N-linked (GlcNAc...) asparagine" evidence="2">
    <location>
        <position position="126"/>
    </location>
</feature>
<feature type="glycosylation site" description="N-linked (GlcNAc...) asparagine" evidence="2">
    <location>
        <position position="283"/>
    </location>
</feature>
<feature type="glycosylation site" description="N-linked (GlcNAc...) asparagine" evidence="2">
    <location>
        <position position="403"/>
    </location>
</feature>
<feature type="disulfide bond" evidence="3">
    <location>
        <begin position="32"/>
        <end position="56"/>
    </location>
</feature>
<feature type="disulfide bond" evidence="1">
    <location>
        <begin position="340"/>
        <end position="421"/>
    </location>
</feature>
<gene>
    <name type="primary">Idgf5</name>
</gene>
<reference key="1">
    <citation type="journal article" date="2006" name="Insect Mol. Biol.">
        <title>Analysis of fat body transcriptome from the adult tsetse fly, Glossina morsitans morsitans.</title>
        <authorList>
            <person name="Attardo G.M."/>
            <person name="Strickler-Dinglasan P."/>
            <person name="Perkin S.A.H."/>
            <person name="Caler E."/>
            <person name="Bonaldo M.F."/>
            <person name="Soares M.B."/>
            <person name="El-Sayeed N.M.A."/>
            <person name="Aksoy S."/>
        </authorList>
    </citation>
    <scope>NUCLEOTIDE SEQUENCE [LARGE SCALE MRNA]</scope>
    <source>
        <tissue>Fat body</tissue>
    </source>
</reference>
<comment type="function">
    <text evidence="1">Cooperates with insulin-like peptides to stimulate the proliferation, polarization and motility of imaginal disk cells. May act by stabilizing the binding of insulin-like peptides to its receptor through a simultaneous interaction with both molecules to form a multiprotein signaling complex (By similarity).</text>
</comment>
<comment type="subcellular location">
    <subcellularLocation>
        <location evidence="1">Secreted</location>
    </subcellularLocation>
</comment>
<comment type="PTM">
    <text evidence="1">Glycosylated.</text>
</comment>
<comment type="miscellaneous">
    <text>Lacks the typical Glu active site in position 154 that is replaced by a Gln residue, preventing the hydrolase activity. Its precise function remains unclear.</text>
</comment>
<comment type="similarity">
    <text evidence="4">Belongs to the glycosyl hydrolase 18 family. IDGF subfamily.</text>
</comment>
<organism>
    <name type="scientific">Glossina morsitans morsitans</name>
    <name type="common">Savannah tsetse fly</name>
    <dbReference type="NCBI Taxonomy" id="37546"/>
    <lineage>
        <taxon>Eukaryota</taxon>
        <taxon>Metazoa</taxon>
        <taxon>Ecdysozoa</taxon>
        <taxon>Arthropoda</taxon>
        <taxon>Hexapoda</taxon>
        <taxon>Insecta</taxon>
        <taxon>Pterygota</taxon>
        <taxon>Neoptera</taxon>
        <taxon>Endopterygota</taxon>
        <taxon>Diptera</taxon>
        <taxon>Brachycera</taxon>
        <taxon>Muscomorpha</taxon>
        <taxon>Hippoboscoidea</taxon>
        <taxon>Glossinidae</taxon>
        <taxon>Glossina</taxon>
    </lineage>
</organism>
<evidence type="ECO:0000250" key="1"/>
<evidence type="ECO:0000255" key="2"/>
<evidence type="ECO:0000255" key="3">
    <source>
        <dbReference type="PROSITE-ProRule" id="PRU01258"/>
    </source>
</evidence>
<evidence type="ECO:0000305" key="4"/>
<dbReference type="EMBL" id="DQ307197">
    <property type="protein sequence ID" value="ABC25097.1"/>
    <property type="molecule type" value="mRNA"/>
</dbReference>
<dbReference type="SMR" id="Q2PQM6"/>
<dbReference type="STRING" id="37546.Q2PQM6"/>
<dbReference type="CAZy" id="GH18">
    <property type="family name" value="Glycoside Hydrolase Family 18"/>
</dbReference>
<dbReference type="GlyCosmos" id="Q2PQM6">
    <property type="glycosylation" value="3 sites, No reported glycans"/>
</dbReference>
<dbReference type="EnsemblMetazoa" id="GMOY009161-RA">
    <property type="protein sequence ID" value="GMOY009161-PA"/>
    <property type="gene ID" value="GMOY009161"/>
</dbReference>
<dbReference type="VEuPathDB" id="VectorBase:GMOY009161"/>
<dbReference type="PhylomeDB" id="Q2PQM6"/>
<dbReference type="Proteomes" id="UP000092444">
    <property type="component" value="Unassembled WGS sequence"/>
</dbReference>
<dbReference type="GO" id="GO:0005576">
    <property type="term" value="C:extracellular region"/>
    <property type="evidence" value="ECO:0007669"/>
    <property type="project" value="UniProtKB-SubCell"/>
</dbReference>
<dbReference type="GO" id="GO:0008061">
    <property type="term" value="F:chitin binding"/>
    <property type="evidence" value="ECO:0007669"/>
    <property type="project" value="InterPro"/>
</dbReference>
<dbReference type="GO" id="GO:0004568">
    <property type="term" value="F:chitinase activity"/>
    <property type="evidence" value="ECO:0007669"/>
    <property type="project" value="TreeGrafter"/>
</dbReference>
<dbReference type="GO" id="GO:0005975">
    <property type="term" value="P:carbohydrate metabolic process"/>
    <property type="evidence" value="ECO:0007669"/>
    <property type="project" value="InterPro"/>
</dbReference>
<dbReference type="GO" id="GO:0006032">
    <property type="term" value="P:chitin catabolic process"/>
    <property type="evidence" value="ECO:0007669"/>
    <property type="project" value="TreeGrafter"/>
</dbReference>
<dbReference type="CDD" id="cd02873">
    <property type="entry name" value="GH18_IDGF"/>
    <property type="match status" value="1"/>
</dbReference>
<dbReference type="FunFam" id="3.20.20.80:FF:000071">
    <property type="entry name" value="Imaginal disc growth factor"/>
    <property type="match status" value="1"/>
</dbReference>
<dbReference type="Gene3D" id="3.10.50.10">
    <property type="match status" value="1"/>
</dbReference>
<dbReference type="Gene3D" id="3.20.20.80">
    <property type="entry name" value="Glycosidases"/>
    <property type="match status" value="1"/>
</dbReference>
<dbReference type="InterPro" id="IPR011583">
    <property type="entry name" value="Chitinase_II/V-like_cat"/>
</dbReference>
<dbReference type="InterPro" id="IPR029070">
    <property type="entry name" value="Chitinase_insertion_sf"/>
</dbReference>
<dbReference type="InterPro" id="IPR001223">
    <property type="entry name" value="Glyco_hydro18_cat"/>
</dbReference>
<dbReference type="InterPro" id="IPR017853">
    <property type="entry name" value="Glycoside_hydrolase_SF"/>
</dbReference>
<dbReference type="InterPro" id="IPR050314">
    <property type="entry name" value="Glycosyl_Hydrlase_18"/>
</dbReference>
<dbReference type="InterPro" id="IPR015520">
    <property type="entry name" value="IDGF"/>
</dbReference>
<dbReference type="PANTHER" id="PTHR11177">
    <property type="entry name" value="CHITINASE"/>
    <property type="match status" value="1"/>
</dbReference>
<dbReference type="PANTHER" id="PTHR11177:SF235">
    <property type="entry name" value="CHITINASE-LIKE PROTEIN IDGF1-RELATED"/>
    <property type="match status" value="1"/>
</dbReference>
<dbReference type="Pfam" id="PF00704">
    <property type="entry name" value="Glyco_hydro_18"/>
    <property type="match status" value="1"/>
</dbReference>
<dbReference type="SMART" id="SM00636">
    <property type="entry name" value="Glyco_18"/>
    <property type="match status" value="1"/>
</dbReference>
<dbReference type="SUPFAM" id="SSF51445">
    <property type="entry name" value="(Trans)glycosidases"/>
    <property type="match status" value="1"/>
</dbReference>
<dbReference type="SUPFAM" id="SSF54556">
    <property type="entry name" value="Chitinase insertion domain"/>
    <property type="match status" value="1"/>
</dbReference>
<dbReference type="PROSITE" id="PS51910">
    <property type="entry name" value="GH18_2"/>
    <property type="match status" value="1"/>
</dbReference>
<proteinExistence type="evidence at transcript level"/>
<name>IDGF5_GLOMM</name>
<accession>Q2PQM6</accession>